<gene>
    <name type="primary">TBC1D21</name>
    <name evidence="8" type="synonym">MGCRABGAP</name>
</gene>
<comment type="function">
    <text evidence="2 5 9 10">Acts as a GTPase-activating protein for Rab family protein(s) (PubMed:19077034, PubMed:28067790). Essential for the establishment of male fertility, and is required for both the production of normal sperm number and sperm function (By similarity). Plays an important role in the formation of intact mitochondria, outer dense fibers and axoneme within the sperm tail (By similarity). Essential for sperm mitochondrial sheath formation and for the interactions of ARMC12 with VDAC2 and VDAC3 (By similarity). May be involved in acrosome formation and cytoskeletal reorganization during spermiogenesis, possibly by regulating RAB3A activity (PubMed:21128978).</text>
</comment>
<comment type="subunit">
    <text evidence="2 5">Interacts with ACTB (By similarity). Interacts with ARMC12, TOMM20, DNAH7 and RAP1A (By similarity). Interacts with RAB10 (PubMed:28067790).</text>
</comment>
<comment type="interaction">
    <interactant intactId="EBI-12018146">
        <id>Q8IYX1</id>
    </interactant>
    <interactant intactId="EBI-742422">
        <id>Q96M91</id>
        <label>CFAP53</label>
    </interactant>
    <organismsDiffer>false</organismsDiffer>
    <experiments>3</experiments>
</comment>
<comment type="interaction">
    <interactant intactId="EBI-12018146">
        <id>Q8IYX1</id>
    </interactant>
    <interactant intactId="EBI-749523">
        <id>Q96CN4</id>
        <label>EVI5L</label>
    </interactant>
    <organismsDiffer>false</organismsDiffer>
    <experiments>3</experiments>
</comment>
<comment type="interaction">
    <interactant intactId="EBI-12018146">
        <id>Q8IYX1</id>
    </interactant>
    <interactant intactId="EBI-12952691">
        <id>O43903-2</id>
        <label>GAS2</label>
    </interactant>
    <organismsDiffer>false</organismsDiffer>
    <experiments>5</experiments>
</comment>
<comment type="interaction">
    <interactant intactId="EBI-12018146">
        <id>Q8IYX1</id>
    </interactant>
    <interactant intactId="EBI-744302">
        <id>P14136</id>
        <label>GFAP</label>
    </interactant>
    <organismsDiffer>false</organismsDiffer>
    <experiments>6</experiments>
</comment>
<comment type="interaction">
    <interactant intactId="EBI-12018146">
        <id>Q8IYX1</id>
    </interactant>
    <interactant intactId="EBI-5462215">
        <id>P29083</id>
        <label>GTF2E1</label>
    </interactant>
    <organismsDiffer>false</organismsDiffer>
    <experiments>3</experiments>
</comment>
<comment type="interaction">
    <interactant intactId="EBI-12018146">
        <id>Q8IYX1</id>
    </interactant>
    <interactant intactId="EBI-1642152">
        <id>Q9ULI4</id>
        <label>KIF26A</label>
    </interactant>
    <organismsDiffer>false</organismsDiffer>
    <experiments>9</experiments>
</comment>
<comment type="interaction">
    <interactant intactId="EBI-12018146">
        <id>Q8IYX1</id>
    </interactant>
    <interactant intactId="EBI-739566">
        <id>P19012</id>
        <label>KRT15</label>
    </interactant>
    <organismsDiffer>false</organismsDiffer>
    <experiments>3</experiments>
</comment>
<comment type="interaction">
    <interactant intactId="EBI-12018146">
        <id>Q8IYX1</id>
    </interactant>
    <interactant intactId="EBI-1058674">
        <id>Q92764</id>
        <label>KRT35</label>
    </interactant>
    <organismsDiffer>false</organismsDiffer>
    <experiments>3</experiments>
</comment>
<comment type="interaction">
    <interactant intactId="EBI-12018146">
        <id>Q8IYX1</id>
    </interactant>
    <interactant intactId="EBI-1045716">
        <id>O76014</id>
        <label>KRT37</label>
    </interactant>
    <organismsDiffer>false</organismsDiffer>
    <experiments>3</experiments>
</comment>
<comment type="interaction">
    <interactant intactId="EBI-12018146">
        <id>Q8IYX1</id>
    </interactant>
    <interactant intactId="EBI-1047263">
        <id>O76015</id>
        <label>KRT38</label>
    </interactant>
    <organismsDiffer>false</organismsDiffer>
    <experiments>5</experiments>
</comment>
<comment type="interaction">
    <interactant intactId="EBI-12018146">
        <id>Q8IYX1</id>
    </interactant>
    <interactant intactId="EBI-10171697">
        <id>Q6A162</id>
        <label>KRT40</label>
    </interactant>
    <organismsDiffer>false</organismsDiffer>
    <experiments>3</experiments>
</comment>
<comment type="interaction">
    <interactant intactId="EBI-12018146">
        <id>Q8IYX1</id>
    </interactant>
    <interactant intactId="EBI-11911016">
        <id>P80188</id>
        <label>LCN2</label>
    </interactant>
    <organismsDiffer>false</organismsDiffer>
    <experiments>3</experiments>
</comment>
<comment type="interaction">
    <interactant intactId="EBI-12018146">
        <id>Q8IYX1</id>
    </interactant>
    <interactant intactId="EBI-16439278">
        <id>Q6FHY5</id>
        <label>MEOX2</label>
    </interactant>
    <organismsDiffer>false</organismsDiffer>
    <experiments>3</experiments>
</comment>
<comment type="interaction">
    <interactant intactId="EBI-12018146">
        <id>Q8IYX1</id>
    </interactant>
    <interactant intactId="EBI-10250949">
        <id>Q6NSM0</id>
        <label>NR1D2</label>
    </interactant>
    <organismsDiffer>false</organismsDiffer>
    <experiments>3</experiments>
</comment>
<comment type="interaction">
    <interactant intactId="EBI-12018146">
        <id>Q8IYX1</id>
    </interactant>
    <interactant intactId="EBI-359462">
        <id>Q16342</id>
        <label>PDCD2</label>
    </interactant>
    <organismsDiffer>false</organismsDiffer>
    <experiments>3</experiments>
</comment>
<comment type="interaction">
    <interactant intactId="EBI-12018146">
        <id>Q8IYX1</id>
    </interactant>
    <interactant intactId="EBI-713832">
        <id>Q6P1K2</id>
        <label>PMF1</label>
    </interactant>
    <organismsDiffer>false</organismsDiffer>
    <experiments>3</experiments>
</comment>
<comment type="interaction">
    <interactant intactId="EBI-12018146">
        <id>Q8IYX1</id>
    </interactant>
    <interactant intactId="EBI-12906008">
        <id>Q6P1K2-3</id>
        <label>PMF1</label>
    </interactant>
    <organismsDiffer>false</organismsDiffer>
    <experiments>3</experiments>
</comment>
<comment type="interaction">
    <interactant intactId="EBI-12018146">
        <id>Q8IYX1</id>
    </interactant>
    <interactant intactId="EBI-11984839">
        <id>Q96QF0-7</id>
        <label>RAB3IP</label>
    </interactant>
    <organismsDiffer>false</organismsDiffer>
    <experiments>3</experiments>
</comment>
<comment type="interaction">
    <interactant intactId="EBI-12018146">
        <id>Q8IYX1</id>
    </interactant>
    <interactant intactId="EBI-10829018">
        <id>Q04864-2</id>
        <label>REL</label>
    </interactant>
    <organismsDiffer>false</organismsDiffer>
    <experiments>3</experiments>
</comment>
<comment type="interaction">
    <interactant intactId="EBI-12018146">
        <id>Q8IYX1</id>
    </interactant>
    <interactant intactId="EBI-10265323">
        <id>Q8N443</id>
        <label>RIBC1</label>
    </interactant>
    <organismsDiffer>false</organismsDiffer>
    <experiments>3</experiments>
</comment>
<comment type="interaction">
    <interactant intactId="EBI-12018146">
        <id>Q8IYX1</id>
    </interactant>
    <interactant intactId="EBI-11986417">
        <id>Q9UPU9-3</id>
        <label>SAMD4A</label>
    </interactant>
    <organismsDiffer>false</organismsDiffer>
    <experiments>3</experiments>
</comment>
<comment type="interaction">
    <interactant intactId="EBI-12018146">
        <id>Q8IYX1</id>
    </interactant>
    <interactant intactId="EBI-11525407">
        <id>Q15019-3</id>
        <label>SEPTIN2</label>
    </interactant>
    <organismsDiffer>false</organismsDiffer>
    <experiments>3</experiments>
</comment>
<comment type="interaction">
    <interactant intactId="EBI-12018146">
        <id>Q8IYX1</id>
    </interactant>
    <interactant intactId="EBI-12424584">
        <id>Q9UNH6-3</id>
        <label>SNX7</label>
    </interactant>
    <organismsDiffer>false</organismsDiffer>
    <experiments>3</experiments>
</comment>
<comment type="interaction">
    <interactant intactId="EBI-12018146">
        <id>Q8IYX1</id>
    </interactant>
    <interactant intactId="EBI-725557">
        <id>Q9NZ72</id>
        <label>STMN3</label>
    </interactant>
    <organismsDiffer>false</organismsDiffer>
    <experiments>3</experiments>
</comment>
<comment type="interaction">
    <interactant intactId="EBI-12018146">
        <id>Q8IYX1</id>
    </interactant>
    <interactant intactId="EBI-11952764">
        <id>Q99081-3</id>
        <label>TCF12</label>
    </interactant>
    <organismsDiffer>false</organismsDiffer>
    <experiments>3</experiments>
</comment>
<comment type="interaction">
    <interactant intactId="EBI-12018146">
        <id>Q8IYX1</id>
    </interactant>
    <interactant intactId="EBI-1200391">
        <id>P62072</id>
        <label>TIMM10</label>
    </interactant>
    <organismsDiffer>false</organismsDiffer>
    <experiments>3</experiments>
</comment>
<comment type="subcellular location">
    <subcellularLocation>
        <location evidence="2">Cytoplasmic vesicle</location>
        <location evidence="2">Secretory vesicle</location>
        <location evidence="2">Acrosome</location>
    </subcellularLocation>
    <subcellularLocation>
        <location evidence="2">Cytoplasm</location>
        <location evidence="2">Cytoskeleton</location>
    </subcellularLocation>
    <text evidence="2">Located at the edge of the acrosomal region, neck and annulus during spermiogenesis. Colocalizes with RAB3A at the acrosome-acroplaxome and neck regions of spermatids. Colocalizes with ACTB at the neck region in elongated spermatids.</text>
</comment>
<comment type="alternative products">
    <event type="alternative splicing"/>
    <isoform>
        <id>Q8IYX1-1</id>
        <name>1</name>
        <sequence type="displayed"/>
    </isoform>
    <isoform>
        <id>Q8IYX1-2</id>
        <name>2</name>
        <sequence type="described" ref="VSP_053999"/>
    </isoform>
</comment>
<comment type="tissue specificity">
    <text evidence="4 6">Expressed in round and elongated spermatids (at protein level). Expressed specifically in adult testis and very weakly in fetal brain.</text>
</comment>
<comment type="domain">
    <text evidence="1">The arginine and glutamine fingers are critical for the GTPase-activating mechanism, they pull out Rab's 'switch 2' glutamine and insert in Rab's active site.</text>
</comment>
<feature type="chain" id="PRO_0000208050" description="TBC1 domain family member 21">
    <location>
        <begin position="1"/>
        <end position="336"/>
    </location>
</feature>
<feature type="domain" description="Rab-GAP TBC" evidence="3">
    <location>
        <begin position="57"/>
        <end position="265"/>
    </location>
</feature>
<feature type="site" description="Arginine finger" evidence="1">
    <location>
        <position position="124"/>
    </location>
</feature>
<feature type="site" description="Glutamine finger" evidence="1">
    <location>
        <position position="163"/>
    </location>
</feature>
<feature type="splice variant" id="VSP_053999" description="In isoform 2." evidence="7">
    <location>
        <begin position="21"/>
        <end position="56"/>
    </location>
</feature>
<feature type="sequence variant" id="VAR_034544" description="In dbSNP:rs16958445.">
    <original>R</original>
    <variation>Q</variation>
    <location>
        <position position="113"/>
    </location>
</feature>
<accession>Q8IYX1</accession>
<accession>B9A6M2</accession>
<sequence>MTTLSPENSLSARQSASFILVKRKPPIDKTEWDSFFDESGHLAKSRDFICVNILERGLHPFVRTEAWKFLTGYFSWQSSQDERLTVDSMRRKNYKALCQMYEKIQPLLENLHRNFTETRNNIARDIQKIYDKDPLGNVLIDKKRLEKILLLSYVCNTQAEYQQGFHEMMMLFQLMVEHDHETFWLFQFFLQKTEHSCVINIGVAKNLDMLSTLITFLDPVFAEHLKGKGAGAVQSLFPWFCFCFQRAFKSFDDVWRLWEVLLTGKPCRNFQVLVAYSMLQMVREQVLQESMGGDDILLACNNLIDLDADELISAACVVYAELIQKDVPQTLKDFFL</sequence>
<evidence type="ECO:0000250" key="1"/>
<evidence type="ECO:0000250" key="2">
    <source>
        <dbReference type="UniProtKB" id="Q9D9D3"/>
    </source>
</evidence>
<evidence type="ECO:0000255" key="3">
    <source>
        <dbReference type="PROSITE-ProRule" id="PRU00163"/>
    </source>
</evidence>
<evidence type="ECO:0000269" key="4">
    <source>
    </source>
</evidence>
<evidence type="ECO:0000269" key="5">
    <source>
    </source>
</evidence>
<evidence type="ECO:0000269" key="6">
    <source>
    </source>
</evidence>
<evidence type="ECO:0000303" key="7">
    <source>
    </source>
</evidence>
<evidence type="ECO:0000303" key="8">
    <source>
    </source>
</evidence>
<evidence type="ECO:0000305" key="9">
    <source>
    </source>
</evidence>
<evidence type="ECO:0000305" key="10">
    <source>
    </source>
</evidence>
<protein>
    <recommendedName>
        <fullName>TBC1 domain family member 21</fullName>
    </recommendedName>
    <alternativeName>
        <fullName evidence="8">Male germ cell Rab GTPase-activating protein</fullName>
    </alternativeName>
</protein>
<dbReference type="EMBL" id="AB449907">
    <property type="protein sequence ID" value="BAH16650.1"/>
    <property type="molecule type" value="mRNA"/>
</dbReference>
<dbReference type="EMBL" id="AC018943">
    <property type="status" value="NOT_ANNOTATED_CDS"/>
    <property type="molecule type" value="Genomic_DNA"/>
</dbReference>
<dbReference type="EMBL" id="AC108137">
    <property type="status" value="NOT_ANNOTATED_CDS"/>
    <property type="molecule type" value="Genomic_DNA"/>
</dbReference>
<dbReference type="EMBL" id="BC033516">
    <property type="protein sequence ID" value="AAH33516.1"/>
    <property type="molecule type" value="mRNA"/>
</dbReference>
<dbReference type="CCDS" id="CCDS10252.1">
    <molecule id="Q8IYX1-1"/>
</dbReference>
<dbReference type="CCDS" id="CCDS66822.1">
    <molecule id="Q8IYX1-2"/>
</dbReference>
<dbReference type="RefSeq" id="NP_001273363.1">
    <molecule id="Q8IYX1-2"/>
    <property type="nucleotide sequence ID" value="NM_001286434.2"/>
</dbReference>
<dbReference type="RefSeq" id="NP_699187.1">
    <molecule id="Q8IYX1-1"/>
    <property type="nucleotide sequence ID" value="NM_153356.3"/>
</dbReference>
<dbReference type="SMR" id="Q8IYX1"/>
<dbReference type="BioGRID" id="127795">
    <property type="interactions" value="34"/>
</dbReference>
<dbReference type="FunCoup" id="Q8IYX1">
    <property type="interactions" value="9"/>
</dbReference>
<dbReference type="IntAct" id="Q8IYX1">
    <property type="interactions" value="27"/>
</dbReference>
<dbReference type="STRING" id="9606.ENSP00000300504"/>
<dbReference type="GlyGen" id="Q8IYX1">
    <property type="glycosylation" value="1 site, 1 O-linked glycan (1 site)"/>
</dbReference>
<dbReference type="PhosphoSitePlus" id="Q8IYX1"/>
<dbReference type="BioMuta" id="TBC1D21"/>
<dbReference type="DMDM" id="59798963"/>
<dbReference type="jPOST" id="Q8IYX1"/>
<dbReference type="MassIVE" id="Q8IYX1"/>
<dbReference type="PaxDb" id="9606-ENSP00000300504"/>
<dbReference type="PeptideAtlas" id="Q8IYX1"/>
<dbReference type="ProteomicsDB" id="71255">
    <molecule id="Q8IYX1-1"/>
</dbReference>
<dbReference type="ProteomicsDB" id="7518"/>
<dbReference type="Antibodypedia" id="26810">
    <property type="antibodies" value="273 antibodies from 21 providers"/>
</dbReference>
<dbReference type="DNASU" id="161514"/>
<dbReference type="Ensembl" id="ENST00000300504.7">
    <molecule id="Q8IYX1-1"/>
    <property type="protein sequence ID" value="ENSP00000300504.2"/>
    <property type="gene ID" value="ENSG00000167139.9"/>
</dbReference>
<dbReference type="Ensembl" id="ENST00000535547.6">
    <molecule id="Q8IYX1-2"/>
    <property type="protein sequence ID" value="ENSP00000439325.2"/>
    <property type="gene ID" value="ENSG00000167139.9"/>
</dbReference>
<dbReference type="GeneID" id="161514"/>
<dbReference type="KEGG" id="hsa:161514"/>
<dbReference type="MANE-Select" id="ENST00000300504.7">
    <property type="protein sequence ID" value="ENSP00000300504.2"/>
    <property type="RefSeq nucleotide sequence ID" value="NM_153356.3"/>
    <property type="RefSeq protein sequence ID" value="NP_699187.1"/>
</dbReference>
<dbReference type="UCSC" id="uc002avz.5">
    <molecule id="Q8IYX1-1"/>
    <property type="organism name" value="human"/>
</dbReference>
<dbReference type="AGR" id="HGNC:28536"/>
<dbReference type="CTD" id="161514"/>
<dbReference type="DisGeNET" id="161514"/>
<dbReference type="GeneCards" id="TBC1D21"/>
<dbReference type="HGNC" id="HGNC:28536">
    <property type="gene designation" value="TBC1D21"/>
</dbReference>
<dbReference type="HPA" id="ENSG00000167139">
    <property type="expression patterns" value="Tissue enriched (testis)"/>
</dbReference>
<dbReference type="MIM" id="620387">
    <property type="type" value="gene"/>
</dbReference>
<dbReference type="neXtProt" id="NX_Q8IYX1"/>
<dbReference type="OpenTargets" id="ENSG00000167139"/>
<dbReference type="PharmGKB" id="PA134890585"/>
<dbReference type="VEuPathDB" id="HostDB:ENSG00000167139"/>
<dbReference type="eggNOG" id="KOG2197">
    <property type="taxonomic scope" value="Eukaryota"/>
</dbReference>
<dbReference type="GeneTree" id="ENSGT00730000111374"/>
<dbReference type="InParanoid" id="Q8IYX1"/>
<dbReference type="OMA" id="NIACDIQ"/>
<dbReference type="OrthoDB" id="10264062at2759"/>
<dbReference type="PAN-GO" id="Q8IYX1">
    <property type="GO annotations" value="2 GO annotations based on evolutionary models"/>
</dbReference>
<dbReference type="PhylomeDB" id="Q8IYX1"/>
<dbReference type="TreeFam" id="TF352573"/>
<dbReference type="PathwayCommons" id="Q8IYX1"/>
<dbReference type="SignaLink" id="Q8IYX1"/>
<dbReference type="BioGRID-ORCS" id="161514">
    <property type="hits" value="6 hits in 1132 CRISPR screens"/>
</dbReference>
<dbReference type="ChiTaRS" id="TBC1D21">
    <property type="organism name" value="human"/>
</dbReference>
<dbReference type="GenomeRNAi" id="161514"/>
<dbReference type="Pharos" id="Q8IYX1">
    <property type="development level" value="Tdark"/>
</dbReference>
<dbReference type="PRO" id="PR:Q8IYX1"/>
<dbReference type="Proteomes" id="UP000005640">
    <property type="component" value="Chromosome 15"/>
</dbReference>
<dbReference type="RNAct" id="Q8IYX1">
    <property type="molecule type" value="protein"/>
</dbReference>
<dbReference type="Bgee" id="ENSG00000167139">
    <property type="expression patterns" value="Expressed in right testis and 34 other cell types or tissues"/>
</dbReference>
<dbReference type="ExpressionAtlas" id="Q8IYX1">
    <property type="expression patterns" value="baseline and differential"/>
</dbReference>
<dbReference type="GO" id="GO:0001669">
    <property type="term" value="C:acrosomal vesicle"/>
    <property type="evidence" value="ECO:0007669"/>
    <property type="project" value="UniProtKB-SubCell"/>
</dbReference>
<dbReference type="GO" id="GO:0031410">
    <property type="term" value="C:cytoplasmic vesicle"/>
    <property type="evidence" value="ECO:0000318"/>
    <property type="project" value="GO_Central"/>
</dbReference>
<dbReference type="GO" id="GO:0005856">
    <property type="term" value="C:cytoskeleton"/>
    <property type="evidence" value="ECO:0007669"/>
    <property type="project" value="UniProtKB-SubCell"/>
</dbReference>
<dbReference type="GO" id="GO:0070062">
    <property type="term" value="C:extracellular exosome"/>
    <property type="evidence" value="ECO:0007005"/>
    <property type="project" value="UniProtKB"/>
</dbReference>
<dbReference type="GO" id="GO:0097225">
    <property type="term" value="C:sperm midpiece"/>
    <property type="evidence" value="ECO:0000250"/>
    <property type="project" value="UniProtKB"/>
</dbReference>
<dbReference type="GO" id="GO:0003779">
    <property type="term" value="F:actin binding"/>
    <property type="evidence" value="ECO:0007669"/>
    <property type="project" value="Ensembl"/>
</dbReference>
<dbReference type="GO" id="GO:0005096">
    <property type="term" value="F:GTPase activator activity"/>
    <property type="evidence" value="ECO:0000314"/>
    <property type="project" value="UniProtKB"/>
</dbReference>
<dbReference type="GO" id="GO:0031267">
    <property type="term" value="F:small GTPase binding"/>
    <property type="evidence" value="ECO:0000315"/>
    <property type="project" value="UniProtKB"/>
</dbReference>
<dbReference type="GO" id="GO:0030317">
    <property type="term" value="P:flagellated sperm motility"/>
    <property type="evidence" value="ECO:0000250"/>
    <property type="project" value="UniProtKB"/>
</dbReference>
<dbReference type="GO" id="GO:0048227">
    <property type="term" value="P:plasma membrane to endosome transport"/>
    <property type="evidence" value="ECO:0000318"/>
    <property type="project" value="GO_Central"/>
</dbReference>
<dbReference type="GO" id="GO:0007288">
    <property type="term" value="P:sperm axoneme assembly"/>
    <property type="evidence" value="ECO:0000250"/>
    <property type="project" value="UniProtKB"/>
</dbReference>
<dbReference type="GO" id="GO:0120317">
    <property type="term" value="P:sperm mitochondrial sheath assembly"/>
    <property type="evidence" value="ECO:0000250"/>
    <property type="project" value="UniProtKB"/>
</dbReference>
<dbReference type="GO" id="GO:0007283">
    <property type="term" value="P:spermatogenesis"/>
    <property type="evidence" value="ECO:0000250"/>
    <property type="project" value="UniProtKB"/>
</dbReference>
<dbReference type="FunFam" id="1.10.472.80:FF:000037">
    <property type="entry name" value="TBC1 domain family member 21"/>
    <property type="match status" value="1"/>
</dbReference>
<dbReference type="FunFam" id="1.10.8.270:FF:000029">
    <property type="entry name" value="TBC1 domain family member 21"/>
    <property type="match status" value="1"/>
</dbReference>
<dbReference type="Gene3D" id="1.10.8.270">
    <property type="entry name" value="putative rabgap domain of human tbc1 domain family member 14 like domains"/>
    <property type="match status" value="1"/>
</dbReference>
<dbReference type="Gene3D" id="1.10.472.80">
    <property type="entry name" value="Ypt/Rab-GAP domain of gyp1p, domain 3"/>
    <property type="match status" value="1"/>
</dbReference>
<dbReference type="InterPro" id="IPR000195">
    <property type="entry name" value="Rab-GAP-TBC_dom"/>
</dbReference>
<dbReference type="InterPro" id="IPR035969">
    <property type="entry name" value="Rab-GAP_TBC_sf"/>
</dbReference>
<dbReference type="PANTHER" id="PTHR22957:SF489">
    <property type="entry name" value="TBC1 DOMAIN FAMILY MEMBER 21"/>
    <property type="match status" value="1"/>
</dbReference>
<dbReference type="PANTHER" id="PTHR22957">
    <property type="entry name" value="TBC1 DOMAIN FAMILY MEMBER GTPASE-ACTIVATING PROTEIN"/>
    <property type="match status" value="1"/>
</dbReference>
<dbReference type="Pfam" id="PF00566">
    <property type="entry name" value="RabGAP-TBC"/>
    <property type="match status" value="1"/>
</dbReference>
<dbReference type="SMART" id="SM00164">
    <property type="entry name" value="TBC"/>
    <property type="match status" value="1"/>
</dbReference>
<dbReference type="SUPFAM" id="SSF47923">
    <property type="entry name" value="Ypt/Rab-GAP domain of gyp1p"/>
    <property type="match status" value="2"/>
</dbReference>
<dbReference type="PROSITE" id="PS50086">
    <property type="entry name" value="TBC_RABGAP"/>
    <property type="match status" value="1"/>
</dbReference>
<proteinExistence type="evidence at protein level"/>
<name>TBC21_HUMAN</name>
<reference key="1">
    <citation type="journal article" date="2009" name="Genes Cells">
        <title>Identification and characterization of a novel Tre-2/Bub2/Cdc16 (TBC) protein that possesses Rab3A-GAP activity.</title>
        <authorList>
            <person name="Ishibashi K."/>
            <person name="Kanno E."/>
            <person name="Itoh T."/>
            <person name="Fukuda M."/>
        </authorList>
    </citation>
    <scope>NUCLEOTIDE SEQUENCE [MRNA] (ISOFORM 2)</scope>
    <scope>PROPOSED FUNCTION</scope>
    <source>
        <tissue>Brain</tissue>
    </source>
</reference>
<reference key="2">
    <citation type="journal article" date="2006" name="Nature">
        <title>Analysis of the DNA sequence and duplication history of human chromosome 15.</title>
        <authorList>
            <person name="Zody M.C."/>
            <person name="Garber M."/>
            <person name="Sharpe T."/>
            <person name="Young S.K."/>
            <person name="Rowen L."/>
            <person name="O'Neill K."/>
            <person name="Whittaker C.A."/>
            <person name="Kamal M."/>
            <person name="Chang J.L."/>
            <person name="Cuomo C.A."/>
            <person name="Dewar K."/>
            <person name="FitzGerald M.G."/>
            <person name="Kodira C.D."/>
            <person name="Madan A."/>
            <person name="Qin S."/>
            <person name="Yang X."/>
            <person name="Abbasi N."/>
            <person name="Abouelleil A."/>
            <person name="Arachchi H.M."/>
            <person name="Baradarani L."/>
            <person name="Birditt B."/>
            <person name="Bloom S."/>
            <person name="Bloom T."/>
            <person name="Borowsky M.L."/>
            <person name="Burke J."/>
            <person name="Butler J."/>
            <person name="Cook A."/>
            <person name="DeArellano K."/>
            <person name="DeCaprio D."/>
            <person name="Dorris L. III"/>
            <person name="Dors M."/>
            <person name="Eichler E.E."/>
            <person name="Engels R."/>
            <person name="Fahey J."/>
            <person name="Fleetwood P."/>
            <person name="Friedman C."/>
            <person name="Gearin G."/>
            <person name="Hall J.L."/>
            <person name="Hensley G."/>
            <person name="Johnson E."/>
            <person name="Jones C."/>
            <person name="Kamat A."/>
            <person name="Kaur A."/>
            <person name="Locke D.P."/>
            <person name="Madan A."/>
            <person name="Munson G."/>
            <person name="Jaffe D.B."/>
            <person name="Lui A."/>
            <person name="Macdonald P."/>
            <person name="Mauceli E."/>
            <person name="Naylor J.W."/>
            <person name="Nesbitt R."/>
            <person name="Nicol R."/>
            <person name="O'Leary S.B."/>
            <person name="Ratcliffe A."/>
            <person name="Rounsley S."/>
            <person name="She X."/>
            <person name="Sneddon K.M.B."/>
            <person name="Stewart S."/>
            <person name="Sougnez C."/>
            <person name="Stone S.M."/>
            <person name="Topham K."/>
            <person name="Vincent D."/>
            <person name="Wang S."/>
            <person name="Zimmer A.R."/>
            <person name="Birren B.W."/>
            <person name="Hood L."/>
            <person name="Lander E.S."/>
            <person name="Nusbaum C."/>
        </authorList>
    </citation>
    <scope>NUCLEOTIDE SEQUENCE [LARGE SCALE GENOMIC DNA]</scope>
</reference>
<reference key="3">
    <citation type="journal article" date="2004" name="Genome Res.">
        <title>The status, quality, and expansion of the NIH full-length cDNA project: the Mammalian Gene Collection (MGC).</title>
        <authorList>
            <consortium name="The MGC Project Team"/>
        </authorList>
    </citation>
    <scope>NUCLEOTIDE SEQUENCE [LARGE SCALE MRNA] (ISOFORM 1)</scope>
    <source>
        <tissue>Brain</tissue>
    </source>
</reference>
<reference key="4">
    <citation type="journal article" date="2011" name="Int. J. Androl.">
        <title>Identification and characterization of a novel Rab GTPase-activating protein in spermatids.</title>
        <authorList>
            <person name="Lin Y.H."/>
            <person name="Lin Y.M."/>
            <person name="Kuo Y.C."/>
            <person name="Wang Y.Y."/>
            <person name="Kuo P.L."/>
        </authorList>
    </citation>
    <scope>PROPOSED FUNCTION</scope>
    <scope>TISSUE SPECIFICITY</scope>
</reference>
<reference key="5">
    <citation type="journal article" date="2017" name="Int. J. Mol. Sci.">
        <title>RAB10 Interacts with the Male Germ Cell-Specific GTPase-Activating Protein during Mammalian Spermiogenesis.</title>
        <authorList>
            <person name="Lin Y.H."/>
            <person name="Ke C.C."/>
            <person name="Wang Y.Y."/>
            <person name="Chen M.F."/>
            <person name="Chen T.M."/>
            <person name="Ku W.C."/>
            <person name="Chiang H.S."/>
            <person name="Yeh C.H."/>
        </authorList>
    </citation>
    <scope>FUNCTION</scope>
    <scope>INTERACTION WITH RAB10</scope>
    <scope>TISSUE SPECIFICITY</scope>
</reference>
<reference key="6">
    <citation type="journal article" date="2021" name="Proc. Natl. Acad. Sci. U.S.A.">
        <title>ARMC12 regulates spatiotemporal mitochondrial dynamics during spermiogenesis and is required for male fertility.</title>
        <authorList>
            <person name="Shimada K."/>
            <person name="Park S."/>
            <person name="Miyata H."/>
            <person name="Yu Z."/>
            <person name="Morohoshi A."/>
            <person name="Oura S."/>
            <person name="Matzuk M.M."/>
            <person name="Ikawa M."/>
        </authorList>
    </citation>
    <scope>TISSUE SPECIFICITY</scope>
</reference>
<organism>
    <name type="scientific">Homo sapiens</name>
    <name type="common">Human</name>
    <dbReference type="NCBI Taxonomy" id="9606"/>
    <lineage>
        <taxon>Eukaryota</taxon>
        <taxon>Metazoa</taxon>
        <taxon>Chordata</taxon>
        <taxon>Craniata</taxon>
        <taxon>Vertebrata</taxon>
        <taxon>Euteleostomi</taxon>
        <taxon>Mammalia</taxon>
        <taxon>Eutheria</taxon>
        <taxon>Euarchontoglires</taxon>
        <taxon>Primates</taxon>
        <taxon>Haplorrhini</taxon>
        <taxon>Catarrhini</taxon>
        <taxon>Hominidae</taxon>
        <taxon>Homo</taxon>
    </lineage>
</organism>
<keyword id="KW-0025">Alternative splicing</keyword>
<keyword id="KW-0963">Cytoplasm</keyword>
<keyword id="KW-0968">Cytoplasmic vesicle</keyword>
<keyword id="KW-0206">Cytoskeleton</keyword>
<keyword id="KW-0221">Differentiation</keyword>
<keyword id="KW-0343">GTPase activation</keyword>
<keyword id="KW-1267">Proteomics identification</keyword>
<keyword id="KW-1185">Reference proteome</keyword>
<keyword id="KW-0744">Spermatogenesis</keyword>